<name>SPLE_STAAU</name>
<protein>
    <recommendedName>
        <fullName>Serine protease SplE</fullName>
        <ecNumber>3.4.21.-</ecNumber>
    </recommendedName>
</protein>
<keyword id="KW-0378">Hydrolase</keyword>
<keyword id="KW-0645">Protease</keyword>
<keyword id="KW-0964">Secreted</keyword>
<keyword id="KW-0720">Serine protease</keyword>
<keyword id="KW-0732">Signal</keyword>
<dbReference type="EC" id="3.4.21.-"/>
<dbReference type="EMBL" id="AF295601">
    <property type="protein sequence ID" value="AAG02239.1"/>
    <property type="molecule type" value="Genomic_DNA"/>
</dbReference>
<dbReference type="SMR" id="Q9FD07"/>
<dbReference type="MEROPS" id="S01.312"/>
<dbReference type="GO" id="GO:0005576">
    <property type="term" value="C:extracellular region"/>
    <property type="evidence" value="ECO:0007669"/>
    <property type="project" value="UniProtKB-SubCell"/>
</dbReference>
<dbReference type="GO" id="GO:0004252">
    <property type="term" value="F:serine-type endopeptidase activity"/>
    <property type="evidence" value="ECO:0007669"/>
    <property type="project" value="InterPro"/>
</dbReference>
<dbReference type="GO" id="GO:0006508">
    <property type="term" value="P:proteolysis"/>
    <property type="evidence" value="ECO:0007669"/>
    <property type="project" value="UniProtKB-KW"/>
</dbReference>
<dbReference type="Gene3D" id="2.40.10.10">
    <property type="entry name" value="Trypsin-like serine proteases"/>
    <property type="match status" value="2"/>
</dbReference>
<dbReference type="InterPro" id="IPR009003">
    <property type="entry name" value="Peptidase_S1_PA"/>
</dbReference>
<dbReference type="InterPro" id="IPR043504">
    <property type="entry name" value="Peptidase_S1_PA_chymotrypsin"/>
</dbReference>
<dbReference type="InterPro" id="IPR008256">
    <property type="entry name" value="Peptidase_S1B"/>
</dbReference>
<dbReference type="InterPro" id="IPR008353">
    <property type="entry name" value="Peptidase_S1B_tx"/>
</dbReference>
<dbReference type="InterPro" id="IPR001254">
    <property type="entry name" value="Trypsin_dom"/>
</dbReference>
<dbReference type="InterPro" id="IPR028301">
    <property type="entry name" value="V8_his_AS"/>
</dbReference>
<dbReference type="PANTHER" id="PTHR43019:SF23">
    <property type="entry name" value="PROTEASE DO-LIKE 5, CHLOROPLASTIC"/>
    <property type="match status" value="1"/>
</dbReference>
<dbReference type="PANTHER" id="PTHR43019">
    <property type="entry name" value="SERINE ENDOPROTEASE DEGS"/>
    <property type="match status" value="1"/>
</dbReference>
<dbReference type="Pfam" id="PF00089">
    <property type="entry name" value="Trypsin"/>
    <property type="match status" value="1"/>
</dbReference>
<dbReference type="PRINTS" id="PR01774">
    <property type="entry name" value="EXFOLTOXIN"/>
</dbReference>
<dbReference type="PRINTS" id="PR00839">
    <property type="entry name" value="V8PROTEASE"/>
</dbReference>
<dbReference type="SUPFAM" id="SSF50494">
    <property type="entry name" value="Trypsin-like serine proteases"/>
    <property type="match status" value="1"/>
</dbReference>
<dbReference type="PROSITE" id="PS00672">
    <property type="entry name" value="V8_HIS"/>
    <property type="match status" value="1"/>
</dbReference>
<evidence type="ECO:0000250" key="1"/>
<evidence type="ECO:0000255" key="2"/>
<evidence type="ECO:0000305" key="3"/>
<accession>Q9FD07</accession>
<sequence>MNKNIIIKSIAALTILTSVTGVGTTMVEGIQQTAKAEHNVKLIKNTNVAPYNGIVSIGSGTGFIVGKNTIVTNKHVVAGMEIGAQIIAHPNGEYNNGGFYKVKKIVRYAGQEDIAILHVEDKAIHPKNRNFKDYTGILKIASEAKENERISIVGYPEPYINKFQMYESTGKVLSVKGNMIISDAFVEPGNSGSAVFNSKYEVVGVHFGGNGPANKSTKGYGVYFSPEIKKFIADNLIK</sequence>
<gene>
    <name type="primary">splE</name>
</gene>
<proteinExistence type="inferred from homology"/>
<organism>
    <name type="scientific">Staphylococcus aureus</name>
    <dbReference type="NCBI Taxonomy" id="1280"/>
    <lineage>
        <taxon>Bacteria</taxon>
        <taxon>Bacillati</taxon>
        <taxon>Bacillota</taxon>
        <taxon>Bacilli</taxon>
        <taxon>Bacillales</taxon>
        <taxon>Staphylococcaceae</taxon>
        <taxon>Staphylococcus</taxon>
    </lineage>
</organism>
<feature type="signal peptide" evidence="2">
    <location>
        <begin position="1"/>
        <end position="36"/>
    </location>
</feature>
<feature type="chain" id="PRO_0000359572" description="Serine protease SplE">
    <location>
        <begin position="37"/>
        <end position="238"/>
    </location>
</feature>
<feature type="active site" description="Charge relay system" evidence="1">
    <location>
        <position position="75"/>
    </location>
</feature>
<feature type="active site" description="Charge relay system" evidence="1">
    <location>
        <position position="113"/>
    </location>
</feature>
<feature type="active site" description="Charge relay system" evidence="1">
    <location>
        <position position="191"/>
    </location>
</feature>
<comment type="subcellular location">
    <subcellularLocation>
        <location evidence="1">Secreted</location>
    </subcellularLocation>
</comment>
<comment type="similarity">
    <text evidence="3">Belongs to the peptidase S1B family.</text>
</comment>
<reference key="1">
    <citation type="submission" date="2000-08" db="EMBL/GenBank/DDBJ databases">
        <title>Cloning and expression of two genes from a novel Staphylococcus aureus operon encoding serine protease like exoproteins.</title>
        <authorList>
            <person name="Nair S.P."/>
            <person name="Williams R.J."/>
        </authorList>
    </citation>
    <scope>NUCLEOTIDE SEQUENCE [GENOMIC DNA]</scope>
    <source>
        <strain>FRI326</strain>
    </source>
</reference>